<sequence length="518" mass="58384">MIPDVSQALAWLEKHPQALKGIQRGLERETLRVNADGTLATTGHPEALGSALTHKWITTDFAEALLEFITPVDGDIQHMLTFMRDLHRYTARKLGDERMWPLSMPCYIAEGQDIELAQYGTSNTGRFKTLYREGLKNRYGALMQTISGVHYNFSLPMAFWQAKCGVTEGEAAKEKISAGYFRLIRNYYRFGWVIPYLFGASPAICSSFLQGKPTTLPFEKTDCGMYYLPYATSLRLSDLGYTNKSQSNLGITFNDLHEYVAGLKRAIKTPSEEYARIGVEKDGKRLQINSNVLQIENELYAPIRPKRVTRSGESPSDALLRGGIEYIEVRSLDINPFSPIGVDEQQVRFLDLFMVWCVLADAPEMSSDELLCTRTNWNRVILEGRKPGLTLGIGCETAQFPLPKVGKDLFRDLKRVAQTLDSIHGGEEYQKVCDELVACFDNPELTFSARILRSMIDEGIGGTGKAFGEAYRNLLREEPLEILQEEEFIAERDASVRRQQEIEAADTEPFAAWLAKHA</sequence>
<protein>
    <recommendedName>
        <fullName evidence="1">Glutamate--cysteine ligase</fullName>
        <ecNumber evidence="1">6.3.2.2</ecNumber>
    </recommendedName>
    <alternativeName>
        <fullName evidence="1">Gamma-ECS</fullName>
        <shortName evidence="1">GCS</shortName>
    </alternativeName>
    <alternativeName>
        <fullName evidence="1">Gamma-glutamylcysteine synthetase</fullName>
    </alternativeName>
</protein>
<name>GSH1_SALCH</name>
<reference key="1">
    <citation type="journal article" date="2005" name="Nucleic Acids Res.">
        <title>The genome sequence of Salmonella enterica serovar Choleraesuis, a highly invasive and resistant zoonotic pathogen.</title>
        <authorList>
            <person name="Chiu C.-H."/>
            <person name="Tang P."/>
            <person name="Chu C."/>
            <person name="Hu S."/>
            <person name="Bao Q."/>
            <person name="Yu J."/>
            <person name="Chou Y.-Y."/>
            <person name="Wang H.-S."/>
            <person name="Lee Y.-S."/>
        </authorList>
    </citation>
    <scope>NUCLEOTIDE SEQUENCE [LARGE SCALE GENOMIC DNA]</scope>
    <source>
        <strain>SC-B67</strain>
    </source>
</reference>
<accession>Q57KV3</accession>
<keyword id="KW-0067">ATP-binding</keyword>
<keyword id="KW-0317">Glutathione biosynthesis</keyword>
<keyword id="KW-0436">Ligase</keyword>
<keyword id="KW-0547">Nucleotide-binding</keyword>
<gene>
    <name evidence="1" type="primary">gshA</name>
    <name type="ordered locus">SCH_2753</name>
</gene>
<evidence type="ECO:0000255" key="1">
    <source>
        <dbReference type="HAMAP-Rule" id="MF_00578"/>
    </source>
</evidence>
<proteinExistence type="inferred from homology"/>
<comment type="catalytic activity">
    <reaction evidence="1">
        <text>L-cysteine + L-glutamate + ATP = gamma-L-glutamyl-L-cysteine + ADP + phosphate + H(+)</text>
        <dbReference type="Rhea" id="RHEA:13285"/>
        <dbReference type="ChEBI" id="CHEBI:15378"/>
        <dbReference type="ChEBI" id="CHEBI:29985"/>
        <dbReference type="ChEBI" id="CHEBI:30616"/>
        <dbReference type="ChEBI" id="CHEBI:35235"/>
        <dbReference type="ChEBI" id="CHEBI:43474"/>
        <dbReference type="ChEBI" id="CHEBI:58173"/>
        <dbReference type="ChEBI" id="CHEBI:456216"/>
        <dbReference type="EC" id="6.3.2.2"/>
    </reaction>
</comment>
<comment type="pathway">
    <text evidence="1">Sulfur metabolism; glutathione biosynthesis; glutathione from L-cysteine and L-glutamate: step 1/2.</text>
</comment>
<comment type="similarity">
    <text evidence="1">Belongs to the glutamate--cysteine ligase type 1 family. Type 1 subfamily.</text>
</comment>
<organism>
    <name type="scientific">Salmonella choleraesuis (strain SC-B67)</name>
    <dbReference type="NCBI Taxonomy" id="321314"/>
    <lineage>
        <taxon>Bacteria</taxon>
        <taxon>Pseudomonadati</taxon>
        <taxon>Pseudomonadota</taxon>
        <taxon>Gammaproteobacteria</taxon>
        <taxon>Enterobacterales</taxon>
        <taxon>Enterobacteriaceae</taxon>
        <taxon>Salmonella</taxon>
    </lineage>
</organism>
<feature type="chain" id="PRO_0000192536" description="Glutamate--cysteine ligase">
    <location>
        <begin position="1"/>
        <end position="518"/>
    </location>
</feature>
<dbReference type="EC" id="6.3.2.2" evidence="1"/>
<dbReference type="EMBL" id="AE017220">
    <property type="protein sequence ID" value="AAX66659.1"/>
    <property type="molecule type" value="Genomic_DNA"/>
</dbReference>
<dbReference type="RefSeq" id="WP_000611821.1">
    <property type="nucleotide sequence ID" value="NC_006905.1"/>
</dbReference>
<dbReference type="SMR" id="Q57KV3"/>
<dbReference type="KEGG" id="sec:SCH_2753"/>
<dbReference type="HOGENOM" id="CLU_020728_3_0_6"/>
<dbReference type="UniPathway" id="UPA00142">
    <property type="reaction ID" value="UER00209"/>
</dbReference>
<dbReference type="Proteomes" id="UP000000538">
    <property type="component" value="Chromosome"/>
</dbReference>
<dbReference type="GO" id="GO:0005829">
    <property type="term" value="C:cytosol"/>
    <property type="evidence" value="ECO:0007669"/>
    <property type="project" value="TreeGrafter"/>
</dbReference>
<dbReference type="GO" id="GO:0005524">
    <property type="term" value="F:ATP binding"/>
    <property type="evidence" value="ECO:0007669"/>
    <property type="project" value="UniProtKB-KW"/>
</dbReference>
<dbReference type="GO" id="GO:0004357">
    <property type="term" value="F:glutamate-cysteine ligase activity"/>
    <property type="evidence" value="ECO:0007669"/>
    <property type="project" value="UniProtKB-UniRule"/>
</dbReference>
<dbReference type="GO" id="GO:0046872">
    <property type="term" value="F:metal ion binding"/>
    <property type="evidence" value="ECO:0007669"/>
    <property type="project" value="TreeGrafter"/>
</dbReference>
<dbReference type="GO" id="GO:0006750">
    <property type="term" value="P:glutathione biosynthetic process"/>
    <property type="evidence" value="ECO:0007669"/>
    <property type="project" value="UniProtKB-UniRule"/>
</dbReference>
<dbReference type="FunFam" id="3.30.590.20:FF:000001">
    <property type="entry name" value="Glutamate--cysteine ligase"/>
    <property type="match status" value="1"/>
</dbReference>
<dbReference type="Gene3D" id="3.30.590.20">
    <property type="match status" value="1"/>
</dbReference>
<dbReference type="HAMAP" id="MF_00578">
    <property type="entry name" value="Glu_cys_ligase"/>
    <property type="match status" value="1"/>
</dbReference>
<dbReference type="InterPro" id="IPR014746">
    <property type="entry name" value="Gln_synth/guanido_kin_cat_dom"/>
</dbReference>
<dbReference type="InterPro" id="IPR007370">
    <property type="entry name" value="Glu_cys_ligase"/>
</dbReference>
<dbReference type="InterPro" id="IPR006334">
    <property type="entry name" value="Glut_cys_ligase"/>
</dbReference>
<dbReference type="NCBIfam" id="TIGR01434">
    <property type="entry name" value="glu_cys_ligase"/>
    <property type="match status" value="1"/>
</dbReference>
<dbReference type="PANTHER" id="PTHR38761">
    <property type="entry name" value="GLUTAMATE--CYSTEINE LIGASE"/>
    <property type="match status" value="1"/>
</dbReference>
<dbReference type="PANTHER" id="PTHR38761:SF1">
    <property type="entry name" value="GLUTAMATE--CYSTEINE LIGASE"/>
    <property type="match status" value="1"/>
</dbReference>
<dbReference type="Pfam" id="PF04262">
    <property type="entry name" value="Glu_cys_ligase"/>
    <property type="match status" value="1"/>
</dbReference>
<dbReference type="SUPFAM" id="SSF55931">
    <property type="entry name" value="Glutamine synthetase/guanido kinase"/>
    <property type="match status" value="1"/>
</dbReference>